<protein>
    <recommendedName>
        <fullName evidence="1">2,3,4,5-tetrahydropyridine-2,6-dicarboxylate N-succinyltransferase</fullName>
        <ecNumber evidence="1">2.3.1.117</ecNumber>
    </recommendedName>
    <alternativeName>
        <fullName evidence="1">Tetrahydrodipicolinate N-succinyltransferase</fullName>
        <shortName evidence="1">THDP succinyltransferase</shortName>
        <shortName evidence="1">THP succinyltransferase</shortName>
        <shortName evidence="1">Tetrahydropicolinate succinylase</shortName>
    </alternativeName>
</protein>
<gene>
    <name evidence="1" type="primary">dapD</name>
    <name type="ordered locus">SBO_0154</name>
</gene>
<sequence length="274" mass="29903">MQQLQNIIETAFERRAEITPTNADTVTREAVNQVIALLDSGALRVAEKIDGQWVTHQWLKKAVLLSFRINDNQVIEGAESRYFDKVPMKFADYDEARFQKEGFRVVPPAAVRQGAFIARNTVLMPSYVNIGAYVDEGTMVDTWATVGSCAQIGKNVHLSGGVGIGGVLEPLQANPTIIEDNCFIGARSEVVEGVIVEEGSVISMGVYIGQSTRIYDRETGEIHYGHVPAGSVVVSGNLPSKDGKYSLYCAVIVKKVDAKTRGKVGINELLRTID</sequence>
<dbReference type="EC" id="2.3.1.117" evidence="1"/>
<dbReference type="EMBL" id="CP000036">
    <property type="protein sequence ID" value="ABB64884.1"/>
    <property type="molecule type" value="Genomic_DNA"/>
</dbReference>
<dbReference type="RefSeq" id="WP_001186665.1">
    <property type="nucleotide sequence ID" value="NC_007613.1"/>
</dbReference>
<dbReference type="SMR" id="Q325X4"/>
<dbReference type="KEGG" id="sbo:SBO_0154"/>
<dbReference type="HOGENOM" id="CLU_050859_0_1_6"/>
<dbReference type="UniPathway" id="UPA00034">
    <property type="reaction ID" value="UER00019"/>
</dbReference>
<dbReference type="Proteomes" id="UP000007067">
    <property type="component" value="Chromosome"/>
</dbReference>
<dbReference type="GO" id="GO:0005737">
    <property type="term" value="C:cytoplasm"/>
    <property type="evidence" value="ECO:0007669"/>
    <property type="project" value="UniProtKB-SubCell"/>
</dbReference>
<dbReference type="GO" id="GO:0008666">
    <property type="term" value="F:2,3,4,5-tetrahydropyridine-2,6-dicarboxylate N-succinyltransferase activity"/>
    <property type="evidence" value="ECO:0007669"/>
    <property type="project" value="UniProtKB-UniRule"/>
</dbReference>
<dbReference type="GO" id="GO:0016779">
    <property type="term" value="F:nucleotidyltransferase activity"/>
    <property type="evidence" value="ECO:0007669"/>
    <property type="project" value="TreeGrafter"/>
</dbReference>
<dbReference type="GO" id="GO:0019877">
    <property type="term" value="P:diaminopimelate biosynthetic process"/>
    <property type="evidence" value="ECO:0007669"/>
    <property type="project" value="UniProtKB-UniRule"/>
</dbReference>
<dbReference type="GO" id="GO:0009089">
    <property type="term" value="P:lysine biosynthetic process via diaminopimelate"/>
    <property type="evidence" value="ECO:0007669"/>
    <property type="project" value="UniProtKB-UniRule"/>
</dbReference>
<dbReference type="CDD" id="cd03350">
    <property type="entry name" value="LbH_THP_succinylT"/>
    <property type="match status" value="1"/>
</dbReference>
<dbReference type="FunFam" id="2.160.10.10:FF:000004">
    <property type="entry name" value="2,3,4,5-tetrahydropyridine-2,6-dicarboxylate N-succinyltransferase"/>
    <property type="match status" value="1"/>
</dbReference>
<dbReference type="Gene3D" id="2.160.10.10">
    <property type="entry name" value="Hexapeptide repeat proteins"/>
    <property type="match status" value="1"/>
</dbReference>
<dbReference type="Gene3D" id="1.10.166.10">
    <property type="entry name" value="Tetrahydrodipicolinate-N-succinyltransferase, N-terminal domain"/>
    <property type="match status" value="1"/>
</dbReference>
<dbReference type="HAMAP" id="MF_00811">
    <property type="entry name" value="DapD"/>
    <property type="match status" value="1"/>
</dbReference>
<dbReference type="InterPro" id="IPR005664">
    <property type="entry name" value="DapD_Trfase_Hexpep_rpt_fam"/>
</dbReference>
<dbReference type="InterPro" id="IPR001451">
    <property type="entry name" value="Hexapep"/>
</dbReference>
<dbReference type="InterPro" id="IPR018357">
    <property type="entry name" value="Hexapep_transf_CS"/>
</dbReference>
<dbReference type="InterPro" id="IPR023180">
    <property type="entry name" value="THP_succinylTrfase_dom1"/>
</dbReference>
<dbReference type="InterPro" id="IPR037133">
    <property type="entry name" value="THP_succinylTrfase_N_sf"/>
</dbReference>
<dbReference type="InterPro" id="IPR011004">
    <property type="entry name" value="Trimer_LpxA-like_sf"/>
</dbReference>
<dbReference type="NCBIfam" id="TIGR00965">
    <property type="entry name" value="dapD"/>
    <property type="match status" value="1"/>
</dbReference>
<dbReference type="NCBIfam" id="NF008808">
    <property type="entry name" value="PRK11830.1"/>
    <property type="match status" value="1"/>
</dbReference>
<dbReference type="PANTHER" id="PTHR19136:SF52">
    <property type="entry name" value="2,3,4,5-TETRAHYDROPYRIDINE-2,6-DICARBOXYLATE N-SUCCINYLTRANSFERASE"/>
    <property type="match status" value="1"/>
</dbReference>
<dbReference type="PANTHER" id="PTHR19136">
    <property type="entry name" value="MOLYBDENUM COFACTOR GUANYLYLTRANSFERASE"/>
    <property type="match status" value="1"/>
</dbReference>
<dbReference type="Pfam" id="PF14602">
    <property type="entry name" value="Hexapep_2"/>
    <property type="match status" value="1"/>
</dbReference>
<dbReference type="Pfam" id="PF14805">
    <property type="entry name" value="THDPS_N_2"/>
    <property type="match status" value="1"/>
</dbReference>
<dbReference type="SUPFAM" id="SSF51161">
    <property type="entry name" value="Trimeric LpxA-like enzymes"/>
    <property type="match status" value="1"/>
</dbReference>
<dbReference type="PROSITE" id="PS00101">
    <property type="entry name" value="HEXAPEP_TRANSFERASES"/>
    <property type="match status" value="1"/>
</dbReference>
<feature type="chain" id="PRO_1000047191" description="2,3,4,5-tetrahydropyridine-2,6-dicarboxylate N-succinyltransferase">
    <location>
        <begin position="1"/>
        <end position="274"/>
    </location>
</feature>
<feature type="binding site" evidence="1">
    <location>
        <position position="104"/>
    </location>
    <ligand>
        <name>substrate</name>
    </ligand>
</feature>
<feature type="binding site" evidence="1">
    <location>
        <position position="141"/>
    </location>
    <ligand>
        <name>substrate</name>
    </ligand>
</feature>
<proteinExistence type="inferred from homology"/>
<evidence type="ECO:0000255" key="1">
    <source>
        <dbReference type="HAMAP-Rule" id="MF_00811"/>
    </source>
</evidence>
<reference key="1">
    <citation type="journal article" date="2005" name="Nucleic Acids Res.">
        <title>Genome dynamics and diversity of Shigella species, the etiologic agents of bacillary dysentery.</title>
        <authorList>
            <person name="Yang F."/>
            <person name="Yang J."/>
            <person name="Zhang X."/>
            <person name="Chen L."/>
            <person name="Jiang Y."/>
            <person name="Yan Y."/>
            <person name="Tang X."/>
            <person name="Wang J."/>
            <person name="Xiong Z."/>
            <person name="Dong J."/>
            <person name="Xue Y."/>
            <person name="Zhu Y."/>
            <person name="Xu X."/>
            <person name="Sun L."/>
            <person name="Chen S."/>
            <person name="Nie H."/>
            <person name="Peng J."/>
            <person name="Xu J."/>
            <person name="Wang Y."/>
            <person name="Yuan Z."/>
            <person name="Wen Y."/>
            <person name="Yao Z."/>
            <person name="Shen Y."/>
            <person name="Qiang B."/>
            <person name="Hou Y."/>
            <person name="Yu J."/>
            <person name="Jin Q."/>
        </authorList>
    </citation>
    <scope>NUCLEOTIDE SEQUENCE [LARGE SCALE GENOMIC DNA]</scope>
    <source>
        <strain>Sb227</strain>
    </source>
</reference>
<comment type="catalytic activity">
    <reaction evidence="1">
        <text>(S)-2,3,4,5-tetrahydrodipicolinate + succinyl-CoA + H2O = (S)-2-succinylamino-6-oxoheptanedioate + CoA</text>
        <dbReference type="Rhea" id="RHEA:17325"/>
        <dbReference type="ChEBI" id="CHEBI:15377"/>
        <dbReference type="ChEBI" id="CHEBI:15685"/>
        <dbReference type="ChEBI" id="CHEBI:16845"/>
        <dbReference type="ChEBI" id="CHEBI:57287"/>
        <dbReference type="ChEBI" id="CHEBI:57292"/>
        <dbReference type="EC" id="2.3.1.117"/>
    </reaction>
</comment>
<comment type="pathway">
    <text evidence="1">Amino-acid biosynthesis; L-lysine biosynthesis via DAP pathway; LL-2,6-diaminopimelate from (S)-tetrahydrodipicolinate (succinylase route): step 1/3.</text>
</comment>
<comment type="subunit">
    <text evidence="1">Homotrimer.</text>
</comment>
<comment type="subcellular location">
    <subcellularLocation>
        <location evidence="1">Cytoplasm</location>
    </subcellularLocation>
</comment>
<comment type="similarity">
    <text evidence="1">Belongs to the transferase hexapeptide repeat family.</text>
</comment>
<keyword id="KW-0012">Acyltransferase</keyword>
<keyword id="KW-0028">Amino-acid biosynthesis</keyword>
<keyword id="KW-0963">Cytoplasm</keyword>
<keyword id="KW-0220">Diaminopimelate biosynthesis</keyword>
<keyword id="KW-0457">Lysine biosynthesis</keyword>
<keyword id="KW-0677">Repeat</keyword>
<keyword id="KW-0808">Transferase</keyword>
<name>DAPD_SHIBS</name>
<accession>Q325X4</accession>
<organism>
    <name type="scientific">Shigella boydii serotype 4 (strain Sb227)</name>
    <dbReference type="NCBI Taxonomy" id="300268"/>
    <lineage>
        <taxon>Bacteria</taxon>
        <taxon>Pseudomonadati</taxon>
        <taxon>Pseudomonadota</taxon>
        <taxon>Gammaproteobacteria</taxon>
        <taxon>Enterobacterales</taxon>
        <taxon>Enterobacteriaceae</taxon>
        <taxon>Shigella</taxon>
    </lineage>
</organism>